<reference key="1">
    <citation type="journal article" date="2011" name="J. Proteomics">
        <title>Snake venomics and venom gland transcriptomic analysis of Brazilian coral snakes, Micrurus altirostris and M. corallinus.</title>
        <authorList>
            <person name="Correa-Netto C."/>
            <person name="Junqueira-de-Azevedo Ide L."/>
            <person name="Silva D.A."/>
            <person name="Ho P.L."/>
            <person name="Leitao-de-Araujo M."/>
            <person name="Alves M.L."/>
            <person name="Sanz L."/>
            <person name="Foguel D."/>
            <person name="Zingali R.B."/>
            <person name="Calvete J.J."/>
        </authorList>
    </citation>
    <scope>NUCLEOTIDE SEQUENCE [MRNA]</scope>
    <scope>PROTEIN SEQUENCE OF 22-36</scope>
    <scope>MASS SPECTROMETRY</scope>
    <scope>SUBCELLULAR LOCATION</scope>
    <source>
        <tissue>Venom</tissue>
        <tissue>Venom gland</tissue>
    </source>
</reference>
<name>3SX3_MICAT</name>
<protein>
    <recommendedName>
        <fullName evidence="5">Three-finger toxin MALT0063C</fullName>
        <shortName evidence="3">3FTx MALT0063C</shortName>
    </recommendedName>
</protein>
<dbReference type="EMBL" id="JF754480">
    <property type="protein sequence ID" value="AED89569.1"/>
    <property type="molecule type" value="mRNA"/>
</dbReference>
<dbReference type="SMR" id="F5CPE2"/>
<dbReference type="GO" id="GO:0005576">
    <property type="term" value="C:extracellular region"/>
    <property type="evidence" value="ECO:0007669"/>
    <property type="project" value="UniProtKB-SubCell"/>
</dbReference>
<dbReference type="GO" id="GO:0090729">
    <property type="term" value="F:toxin activity"/>
    <property type="evidence" value="ECO:0007669"/>
    <property type="project" value="UniProtKB-KW"/>
</dbReference>
<dbReference type="Gene3D" id="2.10.60.10">
    <property type="entry name" value="CD59"/>
    <property type="match status" value="1"/>
</dbReference>
<dbReference type="InterPro" id="IPR045860">
    <property type="entry name" value="Snake_toxin-like_sf"/>
</dbReference>
<dbReference type="SUPFAM" id="SSF57302">
    <property type="entry name" value="Snake toxin-like"/>
    <property type="match status" value="1"/>
</dbReference>
<accession>F5CPE2</accession>
<evidence type="ECO:0000250" key="1">
    <source>
        <dbReference type="UniProtKB" id="P60301"/>
    </source>
</evidence>
<evidence type="ECO:0000269" key="2">
    <source>
    </source>
</evidence>
<evidence type="ECO:0000305" key="3"/>
<evidence type="ECO:0000305" key="4">
    <source>
    </source>
</evidence>
<evidence type="ECO:0000312" key="5">
    <source>
        <dbReference type="EMBL" id="AED89569.1"/>
    </source>
</evidence>
<feature type="signal peptide" evidence="2">
    <location>
        <begin position="1"/>
        <end position="21"/>
    </location>
</feature>
<feature type="chain" id="PRO_0000422902" description="Three-finger toxin MALT0063C" evidence="4">
    <location>
        <begin position="22"/>
        <end position="82"/>
    </location>
</feature>
<feature type="disulfide bond" evidence="1">
    <location>
        <begin position="24"/>
        <end position="42"/>
    </location>
</feature>
<feature type="disulfide bond" evidence="1">
    <location>
        <begin position="35"/>
        <end position="60"/>
    </location>
</feature>
<feature type="disulfide bond" evidence="1">
    <location>
        <begin position="64"/>
        <end position="72"/>
    </location>
</feature>
<feature type="disulfide bond" evidence="1">
    <location>
        <begin position="73"/>
        <end position="78"/>
    </location>
</feature>
<comment type="subcellular location">
    <subcellularLocation>
        <location evidence="2">Secreted</location>
    </subcellularLocation>
</comment>
<comment type="tissue specificity">
    <text evidence="3">Expressed by the venom gland.</text>
</comment>
<comment type="mass spectrometry">
    <text>Average mass.</text>
</comment>
<comment type="similarity">
    <text evidence="3">Belongs to the three-finger toxin family. Short-chain subfamily.</text>
</comment>
<organism>
    <name type="scientific">Micrurus altirostris</name>
    <name type="common">Uruguayan coral snake</name>
    <name type="synonym">Elaps altirostris</name>
    <dbReference type="NCBI Taxonomy" id="129457"/>
    <lineage>
        <taxon>Eukaryota</taxon>
        <taxon>Metazoa</taxon>
        <taxon>Chordata</taxon>
        <taxon>Craniata</taxon>
        <taxon>Vertebrata</taxon>
        <taxon>Euteleostomi</taxon>
        <taxon>Lepidosauria</taxon>
        <taxon>Squamata</taxon>
        <taxon>Bifurcata</taxon>
        <taxon>Unidentata</taxon>
        <taxon>Episquamata</taxon>
        <taxon>Toxicofera</taxon>
        <taxon>Serpentes</taxon>
        <taxon>Colubroidea</taxon>
        <taxon>Elapidae</taxon>
        <taxon>Elapinae</taxon>
        <taxon>Micrurus</taxon>
    </lineage>
</organism>
<keyword id="KW-0903">Direct protein sequencing</keyword>
<keyword id="KW-1015">Disulfide bond</keyword>
<keyword id="KW-0964">Secreted</keyword>
<keyword id="KW-0732">Signal</keyword>
<keyword id="KW-0800">Toxin</keyword>
<sequence>MRTLLLTLVVVTIVCLDLGNSLICYVSEYGAKMTCPEGKTLCEKYAVPLMQGHFYFAWRCTSTCKAGAYNICCSTDLCNKIP</sequence>
<proteinExistence type="evidence at protein level"/>